<organism>
    <name type="scientific">Lactobacillus acidophilus (strain ATCC 700396 / NCK56 / N2 / NCFM)</name>
    <dbReference type="NCBI Taxonomy" id="272621"/>
    <lineage>
        <taxon>Bacteria</taxon>
        <taxon>Bacillati</taxon>
        <taxon>Bacillota</taxon>
        <taxon>Bacilli</taxon>
        <taxon>Lactobacillales</taxon>
        <taxon>Lactobacillaceae</taxon>
        <taxon>Lactobacillus</taxon>
    </lineage>
</organism>
<keyword id="KW-0030">Aminoacyl-tRNA synthetase</keyword>
<keyword id="KW-0067">ATP-binding</keyword>
<keyword id="KW-0963">Cytoplasm</keyword>
<keyword id="KW-0436">Ligase</keyword>
<keyword id="KW-0479">Metal-binding</keyword>
<keyword id="KW-0547">Nucleotide-binding</keyword>
<keyword id="KW-0648">Protein biosynthesis</keyword>
<keyword id="KW-1185">Reference proteome</keyword>
<keyword id="KW-0694">RNA-binding</keyword>
<keyword id="KW-0820">tRNA-binding</keyword>
<keyword id="KW-0862">Zinc</keyword>
<protein>
    <recommendedName>
        <fullName evidence="1">Threonine--tRNA ligase</fullName>
        <ecNumber evidence="1">6.1.1.3</ecNumber>
    </recommendedName>
    <alternativeName>
        <fullName evidence="1">Threonyl-tRNA synthetase</fullName>
        <shortName evidence="1">ThrRS</shortName>
    </alternativeName>
</protein>
<evidence type="ECO:0000255" key="1">
    <source>
        <dbReference type="HAMAP-Rule" id="MF_00184"/>
    </source>
</evidence>
<evidence type="ECO:0000255" key="2">
    <source>
        <dbReference type="PROSITE-ProRule" id="PRU01228"/>
    </source>
</evidence>
<feature type="chain" id="PRO_0000100992" description="Threonine--tRNA ligase">
    <location>
        <begin position="1"/>
        <end position="644"/>
    </location>
</feature>
<feature type="domain" description="TGS" evidence="2">
    <location>
        <begin position="1"/>
        <end position="62"/>
    </location>
</feature>
<feature type="region of interest" description="Catalytic" evidence="1">
    <location>
        <begin position="240"/>
        <end position="538"/>
    </location>
</feature>
<feature type="binding site" evidence="1">
    <location>
        <position position="334"/>
    </location>
    <ligand>
        <name>Zn(2+)</name>
        <dbReference type="ChEBI" id="CHEBI:29105"/>
    </ligand>
</feature>
<feature type="binding site" evidence="1">
    <location>
        <position position="385"/>
    </location>
    <ligand>
        <name>Zn(2+)</name>
        <dbReference type="ChEBI" id="CHEBI:29105"/>
    </ligand>
</feature>
<feature type="binding site" evidence="1">
    <location>
        <position position="515"/>
    </location>
    <ligand>
        <name>Zn(2+)</name>
        <dbReference type="ChEBI" id="CHEBI:29105"/>
    </ligand>
</feature>
<proteinExistence type="inferred from homology"/>
<name>SYT_LACAC</name>
<dbReference type="EC" id="6.1.1.3" evidence="1"/>
<dbReference type="EMBL" id="CP000033">
    <property type="protein sequence ID" value="AAV43361.1"/>
    <property type="molecule type" value="Genomic_DNA"/>
</dbReference>
<dbReference type="RefSeq" id="WP_003548338.1">
    <property type="nucleotide sequence ID" value="NC_006814.3"/>
</dbReference>
<dbReference type="RefSeq" id="YP_194392.1">
    <property type="nucleotide sequence ID" value="NC_006814.3"/>
</dbReference>
<dbReference type="SMR" id="Q5FIW3"/>
<dbReference type="STRING" id="272621.LBA1543"/>
<dbReference type="GeneID" id="93289390"/>
<dbReference type="KEGG" id="lac:LBA1543"/>
<dbReference type="PATRIC" id="fig|272621.13.peg.1466"/>
<dbReference type="eggNOG" id="COG0441">
    <property type="taxonomic scope" value="Bacteria"/>
</dbReference>
<dbReference type="HOGENOM" id="CLU_008554_0_1_9"/>
<dbReference type="OrthoDB" id="9802304at2"/>
<dbReference type="BioCyc" id="LACI272621:G1G49-1509-MONOMER"/>
<dbReference type="Proteomes" id="UP000006381">
    <property type="component" value="Chromosome"/>
</dbReference>
<dbReference type="GO" id="GO:0005737">
    <property type="term" value="C:cytoplasm"/>
    <property type="evidence" value="ECO:0007669"/>
    <property type="project" value="UniProtKB-SubCell"/>
</dbReference>
<dbReference type="GO" id="GO:0005524">
    <property type="term" value="F:ATP binding"/>
    <property type="evidence" value="ECO:0007669"/>
    <property type="project" value="UniProtKB-UniRule"/>
</dbReference>
<dbReference type="GO" id="GO:0140096">
    <property type="term" value="F:catalytic activity, acting on a protein"/>
    <property type="evidence" value="ECO:0007669"/>
    <property type="project" value="UniProtKB-ARBA"/>
</dbReference>
<dbReference type="GO" id="GO:0046872">
    <property type="term" value="F:metal ion binding"/>
    <property type="evidence" value="ECO:0007669"/>
    <property type="project" value="UniProtKB-KW"/>
</dbReference>
<dbReference type="GO" id="GO:0004829">
    <property type="term" value="F:threonine-tRNA ligase activity"/>
    <property type="evidence" value="ECO:0007669"/>
    <property type="project" value="UniProtKB-UniRule"/>
</dbReference>
<dbReference type="GO" id="GO:0016740">
    <property type="term" value="F:transferase activity"/>
    <property type="evidence" value="ECO:0007669"/>
    <property type="project" value="UniProtKB-ARBA"/>
</dbReference>
<dbReference type="GO" id="GO:0000049">
    <property type="term" value="F:tRNA binding"/>
    <property type="evidence" value="ECO:0007669"/>
    <property type="project" value="UniProtKB-KW"/>
</dbReference>
<dbReference type="GO" id="GO:0006435">
    <property type="term" value="P:threonyl-tRNA aminoacylation"/>
    <property type="evidence" value="ECO:0007669"/>
    <property type="project" value="UniProtKB-UniRule"/>
</dbReference>
<dbReference type="CDD" id="cd01667">
    <property type="entry name" value="TGS_ThrRS"/>
    <property type="match status" value="1"/>
</dbReference>
<dbReference type="CDD" id="cd00860">
    <property type="entry name" value="ThrRS_anticodon"/>
    <property type="match status" value="1"/>
</dbReference>
<dbReference type="CDD" id="cd00771">
    <property type="entry name" value="ThrRS_core"/>
    <property type="match status" value="1"/>
</dbReference>
<dbReference type="FunFam" id="3.30.930.10:FF:000002">
    <property type="entry name" value="Threonine--tRNA ligase"/>
    <property type="match status" value="1"/>
</dbReference>
<dbReference type="FunFam" id="3.40.50.800:FF:000001">
    <property type="entry name" value="Threonine--tRNA ligase"/>
    <property type="match status" value="1"/>
</dbReference>
<dbReference type="Gene3D" id="3.10.20.30">
    <property type="match status" value="1"/>
</dbReference>
<dbReference type="Gene3D" id="3.40.50.800">
    <property type="entry name" value="Anticodon-binding domain"/>
    <property type="match status" value="1"/>
</dbReference>
<dbReference type="Gene3D" id="3.30.930.10">
    <property type="entry name" value="Bira Bifunctional Protein, Domain 2"/>
    <property type="match status" value="1"/>
</dbReference>
<dbReference type="Gene3D" id="3.30.980.10">
    <property type="entry name" value="Threonyl-trna Synthetase, Chain A, domain 2"/>
    <property type="match status" value="1"/>
</dbReference>
<dbReference type="HAMAP" id="MF_00184">
    <property type="entry name" value="Thr_tRNA_synth"/>
    <property type="match status" value="1"/>
</dbReference>
<dbReference type="InterPro" id="IPR002314">
    <property type="entry name" value="aa-tRNA-synt_IIb"/>
</dbReference>
<dbReference type="InterPro" id="IPR006195">
    <property type="entry name" value="aa-tRNA-synth_II"/>
</dbReference>
<dbReference type="InterPro" id="IPR045864">
    <property type="entry name" value="aa-tRNA-synth_II/BPL/LPL"/>
</dbReference>
<dbReference type="InterPro" id="IPR004154">
    <property type="entry name" value="Anticodon-bd"/>
</dbReference>
<dbReference type="InterPro" id="IPR036621">
    <property type="entry name" value="Anticodon-bd_dom_sf"/>
</dbReference>
<dbReference type="InterPro" id="IPR012675">
    <property type="entry name" value="Beta-grasp_dom_sf"/>
</dbReference>
<dbReference type="InterPro" id="IPR004095">
    <property type="entry name" value="TGS"/>
</dbReference>
<dbReference type="InterPro" id="IPR012676">
    <property type="entry name" value="TGS-like"/>
</dbReference>
<dbReference type="InterPro" id="IPR002320">
    <property type="entry name" value="Thr-tRNA-ligase_IIa"/>
</dbReference>
<dbReference type="InterPro" id="IPR018163">
    <property type="entry name" value="Thr/Ala-tRNA-synth_IIc_edit"/>
</dbReference>
<dbReference type="InterPro" id="IPR047246">
    <property type="entry name" value="ThrRS_anticodon"/>
</dbReference>
<dbReference type="InterPro" id="IPR033728">
    <property type="entry name" value="ThrRS_core"/>
</dbReference>
<dbReference type="InterPro" id="IPR012947">
    <property type="entry name" value="tRNA_SAD"/>
</dbReference>
<dbReference type="NCBIfam" id="TIGR00418">
    <property type="entry name" value="thrS"/>
    <property type="match status" value="1"/>
</dbReference>
<dbReference type="PANTHER" id="PTHR11451:SF56">
    <property type="entry name" value="THREONINE--TRNA LIGASE 1"/>
    <property type="match status" value="1"/>
</dbReference>
<dbReference type="PANTHER" id="PTHR11451">
    <property type="entry name" value="THREONINE-TRNA LIGASE"/>
    <property type="match status" value="1"/>
</dbReference>
<dbReference type="Pfam" id="PF03129">
    <property type="entry name" value="HGTP_anticodon"/>
    <property type="match status" value="1"/>
</dbReference>
<dbReference type="Pfam" id="PF02824">
    <property type="entry name" value="TGS"/>
    <property type="match status" value="1"/>
</dbReference>
<dbReference type="Pfam" id="PF00587">
    <property type="entry name" value="tRNA-synt_2b"/>
    <property type="match status" value="1"/>
</dbReference>
<dbReference type="Pfam" id="PF07973">
    <property type="entry name" value="tRNA_SAD"/>
    <property type="match status" value="1"/>
</dbReference>
<dbReference type="PRINTS" id="PR01047">
    <property type="entry name" value="TRNASYNTHTHR"/>
</dbReference>
<dbReference type="SMART" id="SM00863">
    <property type="entry name" value="tRNA_SAD"/>
    <property type="match status" value="1"/>
</dbReference>
<dbReference type="SUPFAM" id="SSF52954">
    <property type="entry name" value="Class II aaRS ABD-related"/>
    <property type="match status" value="1"/>
</dbReference>
<dbReference type="SUPFAM" id="SSF55681">
    <property type="entry name" value="Class II aaRS and biotin synthetases"/>
    <property type="match status" value="1"/>
</dbReference>
<dbReference type="SUPFAM" id="SSF81271">
    <property type="entry name" value="TGS-like"/>
    <property type="match status" value="1"/>
</dbReference>
<dbReference type="SUPFAM" id="SSF55186">
    <property type="entry name" value="ThrRS/AlaRS common domain"/>
    <property type="match status" value="1"/>
</dbReference>
<dbReference type="PROSITE" id="PS50862">
    <property type="entry name" value="AA_TRNA_LIGASE_II"/>
    <property type="match status" value="1"/>
</dbReference>
<dbReference type="PROSITE" id="PS51880">
    <property type="entry name" value="TGS"/>
    <property type="match status" value="1"/>
</dbReference>
<sequence length="644" mass="73643">MSFSVTLPDGSKKEFDKAVSVKEVASSIATSLGKAAVGAKVNGQVKPLDYEIDSDVEIAIITDKDEEGLDILRATAAFAFEAVAKKKYPELRLGQHVADEGGFYVDTDKKDQIKVTELPELEKAMEKLIKSGQPIEHVVMDKSELEEMFKDDPFKSDLLKKIDSDKVDAYKLGDFVDFGFDALLPNTGKIKHFKLLSVAGAYWLGKSSNPMLQRIFGTAFFKEAALKEDLKRRAEIKERDHRTIGRDLDLFFVDPKVGAGLPYWMPKGATIRRVVERYIIDREVADGYKHVYTPVLMNLDAYKTSGHWAHYRDDMFPPMDMGDGEMLELRPMNCPSHIQIYKHHIRSYRDLPLRVAELGMMHRYEKSGALSGLQRVREMTLNDGHTFVELDQVQSEFAKILKLIMDVYRDFDITDYYFRLSYRDPKNTDKYFANDEMWERSQKMLKGAMDDLGLDYVEAEGEAAFYGPKLDIQTKTALGNDETMSTIQLDFMLPERFGLTYVGKDGEEHRPVMVHRGIVGTMERFIAYLTEIYKGAFPTWLAPVQAEIIPVNNEAHGEYAEKVRQELAKRGFRVEVDDRNEKMGYKIRESQTQKVPYTLVLGDEEMKNGSVNVRRYGTDEEISKSLDDFINEIDADVKSYSREN</sequence>
<comment type="function">
    <text evidence="1">Catalyzes the attachment of threonine to tRNA(Thr) in a two-step reaction: L-threonine is first activated by ATP to form Thr-AMP and then transferred to the acceptor end of tRNA(Thr). Also edits incorrectly charged L-seryl-tRNA(Thr).</text>
</comment>
<comment type="catalytic activity">
    <reaction evidence="1">
        <text>tRNA(Thr) + L-threonine + ATP = L-threonyl-tRNA(Thr) + AMP + diphosphate + H(+)</text>
        <dbReference type="Rhea" id="RHEA:24624"/>
        <dbReference type="Rhea" id="RHEA-COMP:9670"/>
        <dbReference type="Rhea" id="RHEA-COMP:9704"/>
        <dbReference type="ChEBI" id="CHEBI:15378"/>
        <dbReference type="ChEBI" id="CHEBI:30616"/>
        <dbReference type="ChEBI" id="CHEBI:33019"/>
        <dbReference type="ChEBI" id="CHEBI:57926"/>
        <dbReference type="ChEBI" id="CHEBI:78442"/>
        <dbReference type="ChEBI" id="CHEBI:78534"/>
        <dbReference type="ChEBI" id="CHEBI:456215"/>
        <dbReference type="EC" id="6.1.1.3"/>
    </reaction>
</comment>
<comment type="cofactor">
    <cofactor evidence="1">
        <name>Zn(2+)</name>
        <dbReference type="ChEBI" id="CHEBI:29105"/>
    </cofactor>
    <text evidence="1">Binds 1 zinc ion per subunit.</text>
</comment>
<comment type="subunit">
    <text evidence="1">Homodimer.</text>
</comment>
<comment type="subcellular location">
    <subcellularLocation>
        <location evidence="1">Cytoplasm</location>
    </subcellularLocation>
</comment>
<comment type="similarity">
    <text evidence="1">Belongs to the class-II aminoacyl-tRNA synthetase family.</text>
</comment>
<reference key="1">
    <citation type="journal article" date="2005" name="Proc. Natl. Acad. Sci. U.S.A.">
        <title>Complete genome sequence of the probiotic lactic acid bacterium Lactobacillus acidophilus NCFM.</title>
        <authorList>
            <person name="Altermann E."/>
            <person name="Russell W.M."/>
            <person name="Azcarate-Peril M.A."/>
            <person name="Barrangou R."/>
            <person name="Buck B.L."/>
            <person name="McAuliffe O."/>
            <person name="Souther N."/>
            <person name="Dobson A."/>
            <person name="Duong T."/>
            <person name="Callanan M."/>
            <person name="Lick S."/>
            <person name="Hamrick A."/>
            <person name="Cano R."/>
            <person name="Klaenhammer T.R."/>
        </authorList>
    </citation>
    <scope>NUCLEOTIDE SEQUENCE [LARGE SCALE GENOMIC DNA]</scope>
    <source>
        <strain>ATCC 700396 / NCK56 / N2 / NCFM</strain>
    </source>
</reference>
<accession>Q5FIW3</accession>
<gene>
    <name evidence="1" type="primary">thrS</name>
    <name type="ordered locus">LBA1543</name>
</gene>